<reference key="1">
    <citation type="journal article" date="2008" name="BMC Genomics">
        <title>The genome of Aeromonas salmonicida subsp. salmonicida A449: insights into the evolution of a fish pathogen.</title>
        <authorList>
            <person name="Reith M.E."/>
            <person name="Singh R.K."/>
            <person name="Curtis B."/>
            <person name="Boyd J.M."/>
            <person name="Bouevitch A."/>
            <person name="Kimball J."/>
            <person name="Munholland J."/>
            <person name="Murphy C."/>
            <person name="Sarty D."/>
            <person name="Williams J."/>
            <person name="Nash J.H."/>
            <person name="Johnson S.C."/>
            <person name="Brown L.L."/>
        </authorList>
    </citation>
    <scope>NUCLEOTIDE SEQUENCE [LARGE SCALE GENOMIC DNA]</scope>
    <source>
        <strain>A449</strain>
    </source>
</reference>
<proteinExistence type="inferred from homology"/>
<comment type="function">
    <text evidence="1">RNaseP catalyzes the removal of the 5'-leader sequence from pre-tRNA to produce the mature 5'-terminus. It can also cleave other RNA substrates such as 4.5S RNA. The protein component plays an auxiliary but essential role in vivo by binding to the 5'-leader sequence and broadening the substrate specificity of the ribozyme.</text>
</comment>
<comment type="catalytic activity">
    <reaction evidence="1">
        <text>Endonucleolytic cleavage of RNA, removing 5'-extranucleotides from tRNA precursor.</text>
        <dbReference type="EC" id="3.1.26.5"/>
    </reaction>
</comment>
<comment type="subunit">
    <text evidence="1">Consists of a catalytic RNA component (M1 or rnpB) and a protein subunit.</text>
</comment>
<comment type="similarity">
    <text evidence="1">Belongs to the RnpA family.</text>
</comment>
<accession>A4STS7</accession>
<gene>
    <name evidence="1" type="primary">rnpA</name>
    <name type="ordered locus">ASA_4384</name>
</gene>
<name>RNPA_AERS4</name>
<protein>
    <recommendedName>
        <fullName evidence="1">Ribonuclease P protein component</fullName>
        <shortName evidence="1">RNase P protein</shortName>
        <shortName evidence="1">RNaseP protein</shortName>
        <ecNumber evidence="1">3.1.26.5</ecNumber>
    </recommendedName>
    <alternativeName>
        <fullName evidence="1">Protein C5</fullName>
    </alternativeName>
</protein>
<dbReference type="EC" id="3.1.26.5" evidence="1"/>
<dbReference type="EMBL" id="CP000644">
    <property type="protein sequence ID" value="ABO92299.1"/>
    <property type="molecule type" value="Genomic_DNA"/>
</dbReference>
<dbReference type="RefSeq" id="WP_005319554.1">
    <property type="nucleotide sequence ID" value="NC_009348.1"/>
</dbReference>
<dbReference type="SMR" id="A4STS7"/>
<dbReference type="STRING" id="29491.GCA_000820065_00558"/>
<dbReference type="GeneID" id="79882056"/>
<dbReference type="KEGG" id="asa:ASA_4384"/>
<dbReference type="eggNOG" id="COG0594">
    <property type="taxonomic scope" value="Bacteria"/>
</dbReference>
<dbReference type="HOGENOM" id="CLU_117179_11_0_6"/>
<dbReference type="Proteomes" id="UP000000225">
    <property type="component" value="Chromosome"/>
</dbReference>
<dbReference type="GO" id="GO:0030677">
    <property type="term" value="C:ribonuclease P complex"/>
    <property type="evidence" value="ECO:0007669"/>
    <property type="project" value="TreeGrafter"/>
</dbReference>
<dbReference type="GO" id="GO:0042781">
    <property type="term" value="F:3'-tRNA processing endoribonuclease activity"/>
    <property type="evidence" value="ECO:0007669"/>
    <property type="project" value="TreeGrafter"/>
</dbReference>
<dbReference type="GO" id="GO:0004526">
    <property type="term" value="F:ribonuclease P activity"/>
    <property type="evidence" value="ECO:0007669"/>
    <property type="project" value="UniProtKB-UniRule"/>
</dbReference>
<dbReference type="GO" id="GO:0000049">
    <property type="term" value="F:tRNA binding"/>
    <property type="evidence" value="ECO:0007669"/>
    <property type="project" value="UniProtKB-UniRule"/>
</dbReference>
<dbReference type="GO" id="GO:0001682">
    <property type="term" value="P:tRNA 5'-leader removal"/>
    <property type="evidence" value="ECO:0007669"/>
    <property type="project" value="UniProtKB-UniRule"/>
</dbReference>
<dbReference type="Gene3D" id="3.30.230.10">
    <property type="match status" value="1"/>
</dbReference>
<dbReference type="HAMAP" id="MF_00227">
    <property type="entry name" value="RNase_P"/>
    <property type="match status" value="1"/>
</dbReference>
<dbReference type="InterPro" id="IPR020568">
    <property type="entry name" value="Ribosomal_Su5_D2-typ_SF"/>
</dbReference>
<dbReference type="InterPro" id="IPR014721">
    <property type="entry name" value="Ribsml_uS5_D2-typ_fold_subgr"/>
</dbReference>
<dbReference type="InterPro" id="IPR000100">
    <property type="entry name" value="RNase_P"/>
</dbReference>
<dbReference type="InterPro" id="IPR020539">
    <property type="entry name" value="RNase_P_CS"/>
</dbReference>
<dbReference type="NCBIfam" id="TIGR00188">
    <property type="entry name" value="rnpA"/>
    <property type="match status" value="1"/>
</dbReference>
<dbReference type="PANTHER" id="PTHR33992">
    <property type="entry name" value="RIBONUCLEASE P PROTEIN COMPONENT"/>
    <property type="match status" value="1"/>
</dbReference>
<dbReference type="PANTHER" id="PTHR33992:SF1">
    <property type="entry name" value="RIBONUCLEASE P PROTEIN COMPONENT"/>
    <property type="match status" value="1"/>
</dbReference>
<dbReference type="Pfam" id="PF00825">
    <property type="entry name" value="Ribonuclease_P"/>
    <property type="match status" value="1"/>
</dbReference>
<dbReference type="SUPFAM" id="SSF54211">
    <property type="entry name" value="Ribosomal protein S5 domain 2-like"/>
    <property type="match status" value="1"/>
</dbReference>
<dbReference type="PROSITE" id="PS00648">
    <property type="entry name" value="RIBONUCLEASE_P"/>
    <property type="match status" value="1"/>
</dbReference>
<sequence length="119" mass="13675">MPTPHTFSRELRLLTPEHFKRVFAEPVRAASPQITLLACPNTLEHPRLGLAVPKKALKRAVWRNRVKRVVRESFRLNQASLPAIDIVVIAKGGVKEMDNEELFKLLEKLWRTLSRRCNG</sequence>
<evidence type="ECO:0000255" key="1">
    <source>
        <dbReference type="HAMAP-Rule" id="MF_00227"/>
    </source>
</evidence>
<organism>
    <name type="scientific">Aeromonas salmonicida (strain A449)</name>
    <dbReference type="NCBI Taxonomy" id="382245"/>
    <lineage>
        <taxon>Bacteria</taxon>
        <taxon>Pseudomonadati</taxon>
        <taxon>Pseudomonadota</taxon>
        <taxon>Gammaproteobacteria</taxon>
        <taxon>Aeromonadales</taxon>
        <taxon>Aeromonadaceae</taxon>
        <taxon>Aeromonas</taxon>
    </lineage>
</organism>
<keyword id="KW-0255">Endonuclease</keyword>
<keyword id="KW-0378">Hydrolase</keyword>
<keyword id="KW-0540">Nuclease</keyword>
<keyword id="KW-0694">RNA-binding</keyword>
<keyword id="KW-0819">tRNA processing</keyword>
<feature type="chain" id="PRO_1000021371" description="Ribonuclease P protein component">
    <location>
        <begin position="1"/>
        <end position="119"/>
    </location>
</feature>